<gene>
    <name type="primary">SEC9</name>
    <name type="ordered locus">YALI0E18414g</name>
</gene>
<keyword id="KW-0175">Coiled coil</keyword>
<keyword id="KW-0653">Protein transport</keyword>
<keyword id="KW-1185">Reference proteome</keyword>
<keyword id="KW-0677">Repeat</keyword>
<keyword id="KW-0813">Transport</keyword>
<organism>
    <name type="scientific">Yarrowia lipolytica (strain CLIB 122 / E 150)</name>
    <name type="common">Yeast</name>
    <name type="synonym">Candida lipolytica</name>
    <dbReference type="NCBI Taxonomy" id="284591"/>
    <lineage>
        <taxon>Eukaryota</taxon>
        <taxon>Fungi</taxon>
        <taxon>Dikarya</taxon>
        <taxon>Ascomycota</taxon>
        <taxon>Saccharomycotina</taxon>
        <taxon>Dipodascomycetes</taxon>
        <taxon>Dipodascales</taxon>
        <taxon>Dipodascales incertae sedis</taxon>
        <taxon>Yarrowia</taxon>
    </lineage>
</organism>
<sequence>MGFKKMFKKKDPTESEIRESMQDAGLLVKTDVNGYNRNKFDAYKNYAAQVTQKSSAAPPAARSNPYAVQNQQPSGGNPYAAAAAGGASGSPYGGSDPYSNGGGGNGGSNSNGGSNSNGGSNGSPYKMNNGGNNAAPPPATNSPYSMPQNGAPPKESPAKSSKFKRFGRSKKEEAPPPLEDPRLRPRQYVAPTDYNDAERDDYEPVYDVGLPEEPELPPPPMPGAVNPYASANQGYGSRFGNVDRELEEDKTALFGPRDDPPMDSSYNPALSEQPKYAESVMSMPRQELSQKVRQKEPPAAPAPQTAAVAEYSEATVAVDEEEDLLLGGGSTLNLGRVDSYSYGNEQEYGKQNYTYNYNQGHEFDTVLEEEEKTEQEQEDEDVEAVKQQIRFTKQQSAASTRNALRHAAEAEESGRNTLGMLGSQGERLYNIHSTLALATTQHKIAEDKAKELKTVTRSMFAPHVSNPFNSKRRAQEKEDRIRRERAVAQVEREQRRRDAYDSQQRVVGALDGVGEKSKHRKEMMSKYGSRPGRDRYQFEADEEDDILEDEIDNNLDELSNAAGRLKKLGLAMNEEVEQQNEKLDQIAEQTDDLDISVHLNTARLAGIH</sequence>
<feature type="chain" id="PRO_0000213612" description="Protein transport protein SEC9">
    <location>
        <begin position="1"/>
        <end position="608"/>
    </location>
</feature>
<feature type="domain" description="t-SNARE coiled-coil homology 1" evidence="1">
    <location>
        <begin position="390"/>
        <end position="452"/>
    </location>
</feature>
<feature type="domain" description="t-SNARE coiled-coil homology 2" evidence="1">
    <location>
        <begin position="545"/>
        <end position="607"/>
    </location>
</feature>
<feature type="region of interest" description="Disordered" evidence="2">
    <location>
        <begin position="1"/>
        <end position="23"/>
    </location>
</feature>
<feature type="region of interest" description="Disordered" evidence="2">
    <location>
        <begin position="50"/>
        <end position="307"/>
    </location>
</feature>
<feature type="region of interest" description="Disordered" evidence="2">
    <location>
        <begin position="514"/>
        <end position="533"/>
    </location>
</feature>
<feature type="compositionally biased region" description="Basic and acidic residues" evidence="2">
    <location>
        <begin position="9"/>
        <end position="21"/>
    </location>
</feature>
<feature type="compositionally biased region" description="Low complexity" evidence="2">
    <location>
        <begin position="54"/>
        <end position="67"/>
    </location>
</feature>
<feature type="compositionally biased region" description="Low complexity" evidence="2">
    <location>
        <begin position="74"/>
        <end position="85"/>
    </location>
</feature>
<feature type="compositionally biased region" description="Gly residues" evidence="2">
    <location>
        <begin position="100"/>
        <end position="121"/>
    </location>
</feature>
<feature type="compositionally biased region" description="Low complexity" evidence="2">
    <location>
        <begin position="122"/>
        <end position="134"/>
    </location>
</feature>
<feature type="compositionally biased region" description="Basic and acidic residues" evidence="2">
    <location>
        <begin position="169"/>
        <end position="183"/>
    </location>
</feature>
<feature type="compositionally biased region" description="Acidic residues" evidence="2">
    <location>
        <begin position="198"/>
        <end position="215"/>
    </location>
</feature>
<feature type="compositionally biased region" description="Basic and acidic residues" evidence="2">
    <location>
        <begin position="241"/>
        <end position="260"/>
    </location>
</feature>
<comment type="similarity">
    <text evidence="3">Belongs to the SNAP-25 family.</text>
</comment>
<name>SEC9_YARLI</name>
<dbReference type="EMBL" id="CR382131">
    <property type="protein sequence ID" value="CAG79697.1"/>
    <property type="molecule type" value="Genomic_DNA"/>
</dbReference>
<dbReference type="RefSeq" id="XP_504102.1">
    <property type="nucleotide sequence ID" value="XM_504102.1"/>
</dbReference>
<dbReference type="SMR" id="Q6C5G0"/>
<dbReference type="STRING" id="284591.Q6C5G0"/>
<dbReference type="EnsemblFungi" id="CAG79697">
    <property type="protein sequence ID" value="CAG79697"/>
    <property type="gene ID" value="YALI0_E18414g"/>
</dbReference>
<dbReference type="KEGG" id="yli:2911716"/>
<dbReference type="VEuPathDB" id="FungiDB:YALI0_E18414g"/>
<dbReference type="HOGENOM" id="CLU_020823_1_0_1"/>
<dbReference type="InParanoid" id="Q6C5G0"/>
<dbReference type="OrthoDB" id="123985at4891"/>
<dbReference type="Proteomes" id="UP000001300">
    <property type="component" value="Chromosome E"/>
</dbReference>
<dbReference type="GO" id="GO:0005886">
    <property type="term" value="C:plasma membrane"/>
    <property type="evidence" value="ECO:0000318"/>
    <property type="project" value="GO_Central"/>
</dbReference>
<dbReference type="GO" id="GO:0031201">
    <property type="term" value="C:SNARE complex"/>
    <property type="evidence" value="ECO:0000318"/>
    <property type="project" value="GO_Central"/>
</dbReference>
<dbReference type="GO" id="GO:0005484">
    <property type="term" value="F:SNAP receptor activity"/>
    <property type="evidence" value="ECO:0000318"/>
    <property type="project" value="GO_Central"/>
</dbReference>
<dbReference type="GO" id="GO:0019905">
    <property type="term" value="F:syntaxin binding"/>
    <property type="evidence" value="ECO:0000318"/>
    <property type="project" value="GO_Central"/>
</dbReference>
<dbReference type="GO" id="GO:0006887">
    <property type="term" value="P:exocytosis"/>
    <property type="evidence" value="ECO:0000318"/>
    <property type="project" value="GO_Central"/>
</dbReference>
<dbReference type="GO" id="GO:0015031">
    <property type="term" value="P:protein transport"/>
    <property type="evidence" value="ECO:0007669"/>
    <property type="project" value="UniProtKB-KW"/>
</dbReference>
<dbReference type="GO" id="GO:0006906">
    <property type="term" value="P:vesicle fusion"/>
    <property type="evidence" value="ECO:0000318"/>
    <property type="project" value="GO_Central"/>
</dbReference>
<dbReference type="CDD" id="cd15857">
    <property type="entry name" value="SNARE_SEC9C"/>
    <property type="match status" value="1"/>
</dbReference>
<dbReference type="CDD" id="cd15886">
    <property type="entry name" value="SNARE_SEC9N"/>
    <property type="match status" value="1"/>
</dbReference>
<dbReference type="Gene3D" id="1.20.5.110">
    <property type="match status" value="2"/>
</dbReference>
<dbReference type="InterPro" id="IPR000727">
    <property type="entry name" value="T_SNARE_dom"/>
</dbReference>
<dbReference type="PANTHER" id="PTHR19305">
    <property type="entry name" value="SYNAPTOSOMAL ASSOCIATED PROTEIN"/>
    <property type="match status" value="1"/>
</dbReference>
<dbReference type="PANTHER" id="PTHR19305:SF9">
    <property type="entry name" value="SYNAPTOSOMAL-ASSOCIATED PROTEIN 29"/>
    <property type="match status" value="1"/>
</dbReference>
<dbReference type="SMART" id="SM00397">
    <property type="entry name" value="t_SNARE"/>
    <property type="match status" value="2"/>
</dbReference>
<dbReference type="SUPFAM" id="SSF58038">
    <property type="entry name" value="SNARE fusion complex"/>
    <property type="match status" value="2"/>
</dbReference>
<dbReference type="PROSITE" id="PS50192">
    <property type="entry name" value="T_SNARE"/>
    <property type="match status" value="1"/>
</dbReference>
<accession>Q6C5G0</accession>
<protein>
    <recommendedName>
        <fullName>Protein transport protein SEC9</fullName>
    </recommendedName>
</protein>
<proteinExistence type="inferred from homology"/>
<reference key="1">
    <citation type="journal article" date="2004" name="Nature">
        <title>Genome evolution in yeasts.</title>
        <authorList>
            <person name="Dujon B."/>
            <person name="Sherman D."/>
            <person name="Fischer G."/>
            <person name="Durrens P."/>
            <person name="Casaregola S."/>
            <person name="Lafontaine I."/>
            <person name="de Montigny J."/>
            <person name="Marck C."/>
            <person name="Neuveglise C."/>
            <person name="Talla E."/>
            <person name="Goffard N."/>
            <person name="Frangeul L."/>
            <person name="Aigle M."/>
            <person name="Anthouard V."/>
            <person name="Babour A."/>
            <person name="Barbe V."/>
            <person name="Barnay S."/>
            <person name="Blanchin S."/>
            <person name="Beckerich J.-M."/>
            <person name="Beyne E."/>
            <person name="Bleykasten C."/>
            <person name="Boisrame A."/>
            <person name="Boyer J."/>
            <person name="Cattolico L."/>
            <person name="Confanioleri F."/>
            <person name="de Daruvar A."/>
            <person name="Despons L."/>
            <person name="Fabre E."/>
            <person name="Fairhead C."/>
            <person name="Ferry-Dumazet H."/>
            <person name="Groppi A."/>
            <person name="Hantraye F."/>
            <person name="Hennequin C."/>
            <person name="Jauniaux N."/>
            <person name="Joyet P."/>
            <person name="Kachouri R."/>
            <person name="Kerrest A."/>
            <person name="Koszul R."/>
            <person name="Lemaire M."/>
            <person name="Lesur I."/>
            <person name="Ma L."/>
            <person name="Muller H."/>
            <person name="Nicaud J.-M."/>
            <person name="Nikolski M."/>
            <person name="Oztas S."/>
            <person name="Ozier-Kalogeropoulos O."/>
            <person name="Pellenz S."/>
            <person name="Potier S."/>
            <person name="Richard G.-F."/>
            <person name="Straub M.-L."/>
            <person name="Suleau A."/>
            <person name="Swennen D."/>
            <person name="Tekaia F."/>
            <person name="Wesolowski-Louvel M."/>
            <person name="Westhof E."/>
            <person name="Wirth B."/>
            <person name="Zeniou-Meyer M."/>
            <person name="Zivanovic Y."/>
            <person name="Bolotin-Fukuhara M."/>
            <person name="Thierry A."/>
            <person name="Bouchier C."/>
            <person name="Caudron B."/>
            <person name="Scarpelli C."/>
            <person name="Gaillardin C."/>
            <person name="Weissenbach J."/>
            <person name="Wincker P."/>
            <person name="Souciet J.-L."/>
        </authorList>
    </citation>
    <scope>NUCLEOTIDE SEQUENCE [LARGE SCALE GENOMIC DNA]</scope>
    <source>
        <strain>CLIB 122 / E 150</strain>
    </source>
</reference>
<evidence type="ECO:0000255" key="1">
    <source>
        <dbReference type="PROSITE-ProRule" id="PRU00202"/>
    </source>
</evidence>
<evidence type="ECO:0000256" key="2">
    <source>
        <dbReference type="SAM" id="MobiDB-lite"/>
    </source>
</evidence>
<evidence type="ECO:0000305" key="3"/>